<accession>B9IW18</accession>
<dbReference type="EC" id="3.5.1.49" evidence="1"/>
<dbReference type="EMBL" id="CP000227">
    <property type="protein sequence ID" value="ACM14155.1"/>
    <property type="molecule type" value="Genomic_DNA"/>
</dbReference>
<dbReference type="SMR" id="B9IW18"/>
<dbReference type="KEGG" id="bcq:BCQ_3727"/>
<dbReference type="HOGENOM" id="CLU_071797_0_0_9"/>
<dbReference type="Proteomes" id="UP000000441">
    <property type="component" value="Chromosome"/>
</dbReference>
<dbReference type="GO" id="GO:0004328">
    <property type="term" value="F:formamidase activity"/>
    <property type="evidence" value="ECO:0007669"/>
    <property type="project" value="UniProtKB-UniRule"/>
</dbReference>
<dbReference type="GO" id="GO:0050126">
    <property type="term" value="F:N-carbamoylputrescine amidase activity"/>
    <property type="evidence" value="ECO:0007669"/>
    <property type="project" value="TreeGrafter"/>
</dbReference>
<dbReference type="GO" id="GO:0033388">
    <property type="term" value="P:putrescine biosynthetic process from arginine"/>
    <property type="evidence" value="ECO:0007669"/>
    <property type="project" value="TreeGrafter"/>
</dbReference>
<dbReference type="CDD" id="cd07565">
    <property type="entry name" value="aliphatic_amidase"/>
    <property type="match status" value="1"/>
</dbReference>
<dbReference type="Gene3D" id="3.60.110.10">
    <property type="entry name" value="Carbon-nitrogen hydrolase"/>
    <property type="match status" value="1"/>
</dbReference>
<dbReference type="HAMAP" id="MF_01243">
    <property type="entry name" value="Formamidase"/>
    <property type="match status" value="1"/>
</dbReference>
<dbReference type="InterPro" id="IPR050345">
    <property type="entry name" value="Aliph_Amidase/BUP"/>
</dbReference>
<dbReference type="InterPro" id="IPR003010">
    <property type="entry name" value="C-N_Hydrolase"/>
</dbReference>
<dbReference type="InterPro" id="IPR036526">
    <property type="entry name" value="C-N_Hydrolase_sf"/>
</dbReference>
<dbReference type="InterPro" id="IPR022843">
    <property type="entry name" value="Formamidase"/>
</dbReference>
<dbReference type="NCBIfam" id="NF009803">
    <property type="entry name" value="PRK13287.1"/>
    <property type="match status" value="1"/>
</dbReference>
<dbReference type="PANTHER" id="PTHR43674:SF15">
    <property type="entry name" value="FORMAMIDASE"/>
    <property type="match status" value="1"/>
</dbReference>
<dbReference type="PANTHER" id="PTHR43674">
    <property type="entry name" value="NITRILASE C965.09-RELATED"/>
    <property type="match status" value="1"/>
</dbReference>
<dbReference type="Pfam" id="PF00795">
    <property type="entry name" value="CN_hydrolase"/>
    <property type="match status" value="1"/>
</dbReference>
<dbReference type="SUPFAM" id="SSF56317">
    <property type="entry name" value="Carbon-nitrogen hydrolase"/>
    <property type="match status" value="1"/>
</dbReference>
<dbReference type="PROSITE" id="PS50263">
    <property type="entry name" value="CN_HYDROLASE"/>
    <property type="match status" value="1"/>
</dbReference>
<name>AMIF_BACCQ</name>
<organism>
    <name type="scientific">Bacillus cereus (strain Q1)</name>
    <dbReference type="NCBI Taxonomy" id="361100"/>
    <lineage>
        <taxon>Bacteria</taxon>
        <taxon>Bacillati</taxon>
        <taxon>Bacillota</taxon>
        <taxon>Bacilli</taxon>
        <taxon>Bacillales</taxon>
        <taxon>Bacillaceae</taxon>
        <taxon>Bacillus</taxon>
        <taxon>Bacillus cereus group</taxon>
    </lineage>
</organism>
<protein>
    <recommendedName>
        <fullName evidence="1">Formamidase</fullName>
        <ecNumber evidence="1">3.5.1.49</ecNumber>
    </recommendedName>
    <alternativeName>
        <fullName evidence="1">Formamide amidohydrolase</fullName>
    </alternativeName>
</protein>
<reference key="1">
    <citation type="journal article" date="2009" name="J. Bacteriol.">
        <title>Complete genome sequence of the extremophilic Bacillus cereus strain Q1 with industrial applications.</title>
        <authorList>
            <person name="Xiong Z."/>
            <person name="Jiang Y."/>
            <person name="Qi D."/>
            <person name="Lu H."/>
            <person name="Yang F."/>
            <person name="Yang J."/>
            <person name="Chen L."/>
            <person name="Sun L."/>
            <person name="Xu X."/>
            <person name="Xue Y."/>
            <person name="Zhu Y."/>
            <person name="Jin Q."/>
        </authorList>
    </citation>
    <scope>NUCLEOTIDE SEQUENCE [LARGE SCALE GENOMIC DNA]</scope>
    <source>
        <strain>Q1</strain>
    </source>
</reference>
<keyword id="KW-0378">Hydrolase</keyword>
<evidence type="ECO:0000255" key="1">
    <source>
        <dbReference type="HAMAP-Rule" id="MF_01243"/>
    </source>
</evidence>
<evidence type="ECO:0000255" key="2">
    <source>
        <dbReference type="PROSITE-ProRule" id="PRU00054"/>
    </source>
</evidence>
<sequence>MGSSGSMVKPISGFLAALIQYPVPVVESRADIDKQIKQIIKTIHSTKAGYPGLELIVFPEYSTQGLNTKKWTTEEFLCTVPGPETDLFAEACKESEVYGVFSLMERNPDGGEPYNTAIIIDPQGEMILKYRKLNPWVPVEPWKAGDLGLPVCDGPGGSKLAVCICHDGMFPEVAREAAYKGANVLIRISGYSTQVSEQWMLTNRSNAWQNLMYTLSVNLAGYDGVFYYFGEGQVCNFDGTTLVQGHRNPWEIVTAEVYPELADQARLGWGLENNIYNLGSRGYVATPGGVKENPYTFVKDLAEGKYKVPWEDEIKVKDGTIYGYPVKKTIHS</sequence>
<proteinExistence type="inferred from homology"/>
<gene>
    <name evidence="1" type="primary">amiF</name>
    <name type="ordered locus">BCQ_3727</name>
</gene>
<comment type="function">
    <text evidence="1">Is an aliphatic amidase with a restricted substrate specificity, as it only hydrolyzes formamide.</text>
</comment>
<comment type="catalytic activity">
    <reaction evidence="1">
        <text>formamide + H2O = formate + NH4(+)</text>
        <dbReference type="Rhea" id="RHEA:21948"/>
        <dbReference type="ChEBI" id="CHEBI:15377"/>
        <dbReference type="ChEBI" id="CHEBI:15740"/>
        <dbReference type="ChEBI" id="CHEBI:16397"/>
        <dbReference type="ChEBI" id="CHEBI:28938"/>
        <dbReference type="EC" id="3.5.1.49"/>
    </reaction>
</comment>
<comment type="similarity">
    <text evidence="1">Belongs to the carbon-nitrogen hydrolase superfamily. Aliphatic amidase family.</text>
</comment>
<feature type="chain" id="PRO_1000165039" description="Formamidase">
    <location>
        <begin position="1"/>
        <end position="332"/>
    </location>
</feature>
<feature type="domain" description="CN hydrolase" evidence="2">
    <location>
        <begin position="14"/>
        <end position="259"/>
    </location>
</feature>
<feature type="active site" description="Proton acceptor" evidence="1">
    <location>
        <position position="60"/>
    </location>
</feature>
<feature type="active site" description="Proton donor" evidence="1">
    <location>
        <position position="132"/>
    </location>
</feature>
<feature type="active site" description="Nucleophile" evidence="1">
    <location>
        <position position="165"/>
    </location>
</feature>